<protein>
    <recommendedName>
        <fullName>Acetylcholine receptor-like protein cup-4</fullName>
    </recommendedName>
    <alternativeName>
        <fullName>Coelomocyte uptake defective protein 4</fullName>
    </alternativeName>
</protein>
<keyword id="KW-0968">Cytoplasmic vesicle</keyword>
<keyword id="KW-0254">Endocytosis</keyword>
<keyword id="KW-0325">Glycoprotein</keyword>
<keyword id="KW-0407">Ion channel</keyword>
<keyword id="KW-0406">Ion transport</keyword>
<keyword id="KW-1071">Ligand-gated ion channel</keyword>
<keyword id="KW-0472">Membrane</keyword>
<keyword id="KW-0675">Receptor</keyword>
<keyword id="KW-1185">Reference proteome</keyword>
<keyword id="KW-0732">Signal</keyword>
<keyword id="KW-0812">Transmembrane</keyword>
<keyword id="KW-1133">Transmembrane helix</keyword>
<keyword id="KW-0813">Transport</keyword>
<dbReference type="EMBL" id="HE600962">
    <property type="protein sequence ID" value="CAP31276.2"/>
    <property type="molecule type" value="Genomic_DNA"/>
</dbReference>
<dbReference type="SMR" id="A8XF54"/>
<dbReference type="FunCoup" id="A8XF54">
    <property type="interactions" value="60"/>
</dbReference>
<dbReference type="STRING" id="6238.A8XF54"/>
<dbReference type="GlyCosmos" id="A8XF54">
    <property type="glycosylation" value="5 sites, No reported glycans"/>
</dbReference>
<dbReference type="EnsemblMetazoa" id="CBG12273.1">
    <property type="protein sequence ID" value="CBG12273.1"/>
    <property type="gene ID" value="WBGene00033246"/>
</dbReference>
<dbReference type="WormBase" id="CBG12273">
    <property type="protein sequence ID" value="CBP25753"/>
    <property type="gene ID" value="WBGene00033246"/>
    <property type="gene designation" value="Cbr-cup-4"/>
</dbReference>
<dbReference type="eggNOG" id="KOG3645">
    <property type="taxonomic scope" value="Eukaryota"/>
</dbReference>
<dbReference type="HOGENOM" id="CLU_633456_0_0_1"/>
<dbReference type="InParanoid" id="A8XF54"/>
<dbReference type="OMA" id="ARVKKWQ"/>
<dbReference type="Proteomes" id="UP000008549">
    <property type="component" value="Unassembled WGS sequence"/>
</dbReference>
<dbReference type="GO" id="GO:0030659">
    <property type="term" value="C:cytoplasmic vesicle membrane"/>
    <property type="evidence" value="ECO:0000250"/>
    <property type="project" value="UniProtKB"/>
</dbReference>
<dbReference type="GO" id="GO:0043005">
    <property type="term" value="C:neuron projection"/>
    <property type="evidence" value="ECO:0000318"/>
    <property type="project" value="GO_Central"/>
</dbReference>
<dbReference type="GO" id="GO:0005886">
    <property type="term" value="C:plasma membrane"/>
    <property type="evidence" value="ECO:0000318"/>
    <property type="project" value="GO_Central"/>
</dbReference>
<dbReference type="GO" id="GO:0098794">
    <property type="term" value="C:postsynapse"/>
    <property type="evidence" value="ECO:0007669"/>
    <property type="project" value="GOC"/>
</dbReference>
<dbReference type="GO" id="GO:0045202">
    <property type="term" value="C:synapse"/>
    <property type="evidence" value="ECO:0000318"/>
    <property type="project" value="GO_Central"/>
</dbReference>
<dbReference type="GO" id="GO:1902495">
    <property type="term" value="C:transmembrane transporter complex"/>
    <property type="evidence" value="ECO:0000318"/>
    <property type="project" value="GO_Central"/>
</dbReference>
<dbReference type="GO" id="GO:0005231">
    <property type="term" value="F:excitatory extracellular ligand-gated monoatomic ion channel activity"/>
    <property type="evidence" value="ECO:0000318"/>
    <property type="project" value="GO_Central"/>
</dbReference>
<dbReference type="GO" id="GO:0004888">
    <property type="term" value="F:transmembrane signaling receptor activity"/>
    <property type="evidence" value="ECO:0007669"/>
    <property type="project" value="InterPro"/>
</dbReference>
<dbReference type="GO" id="GO:1904315">
    <property type="term" value="F:transmitter-gated monoatomic ion channel activity involved in regulation of postsynaptic membrane potential"/>
    <property type="evidence" value="ECO:0000318"/>
    <property type="project" value="GO_Central"/>
</dbReference>
<dbReference type="GO" id="GO:0007268">
    <property type="term" value="P:chemical synaptic transmission"/>
    <property type="evidence" value="ECO:0000318"/>
    <property type="project" value="GO_Central"/>
</dbReference>
<dbReference type="GO" id="GO:0008340">
    <property type="term" value="P:determination of adult lifespan"/>
    <property type="evidence" value="ECO:0007669"/>
    <property type="project" value="EnsemblMetazoa"/>
</dbReference>
<dbReference type="GO" id="GO:0006897">
    <property type="term" value="P:endocytosis"/>
    <property type="evidence" value="ECO:0007669"/>
    <property type="project" value="UniProtKB-KW"/>
</dbReference>
<dbReference type="GO" id="GO:0034220">
    <property type="term" value="P:monoatomic ion transmembrane transport"/>
    <property type="evidence" value="ECO:0000318"/>
    <property type="project" value="GO_Central"/>
</dbReference>
<dbReference type="GO" id="GO:1901046">
    <property type="term" value="P:positive regulation of egg-laying behavior"/>
    <property type="evidence" value="ECO:0007669"/>
    <property type="project" value="EnsemblMetazoa"/>
</dbReference>
<dbReference type="GO" id="GO:0030100">
    <property type="term" value="P:regulation of endocytosis"/>
    <property type="evidence" value="ECO:0000250"/>
    <property type="project" value="UniProtKB"/>
</dbReference>
<dbReference type="GO" id="GO:0042391">
    <property type="term" value="P:regulation of membrane potential"/>
    <property type="evidence" value="ECO:0000318"/>
    <property type="project" value="GO_Central"/>
</dbReference>
<dbReference type="GO" id="GO:0061771">
    <property type="term" value="P:response to caloric restriction"/>
    <property type="evidence" value="ECO:0007669"/>
    <property type="project" value="EnsemblMetazoa"/>
</dbReference>
<dbReference type="GO" id="GO:1901562">
    <property type="term" value="P:response to paraquat"/>
    <property type="evidence" value="ECO:0007669"/>
    <property type="project" value="EnsemblMetazoa"/>
</dbReference>
<dbReference type="CDD" id="cd18989">
    <property type="entry name" value="LGIC_ECD_cation"/>
    <property type="match status" value="1"/>
</dbReference>
<dbReference type="FunFam" id="2.70.170.10:FF:000057">
    <property type="entry name" value="Ligand-Gated ion Channel"/>
    <property type="match status" value="1"/>
</dbReference>
<dbReference type="Gene3D" id="2.70.170.10">
    <property type="entry name" value="Neurotransmitter-gated ion-channel ligand-binding domain"/>
    <property type="match status" value="1"/>
</dbReference>
<dbReference type="InterPro" id="IPR006202">
    <property type="entry name" value="Neur_chan_lig-bd"/>
</dbReference>
<dbReference type="InterPro" id="IPR036734">
    <property type="entry name" value="Neur_chan_lig-bd_sf"/>
</dbReference>
<dbReference type="InterPro" id="IPR006201">
    <property type="entry name" value="Neur_channel"/>
</dbReference>
<dbReference type="InterPro" id="IPR018000">
    <property type="entry name" value="Neurotransmitter_ion_chnl_CS"/>
</dbReference>
<dbReference type="PANTHER" id="PTHR18945">
    <property type="entry name" value="NEUROTRANSMITTER GATED ION CHANNEL"/>
    <property type="match status" value="1"/>
</dbReference>
<dbReference type="Pfam" id="PF02931">
    <property type="entry name" value="Neur_chan_LBD"/>
    <property type="match status" value="1"/>
</dbReference>
<dbReference type="SUPFAM" id="SSF63712">
    <property type="entry name" value="Nicotinic receptor ligand binding domain-like"/>
    <property type="match status" value="1"/>
</dbReference>
<dbReference type="PROSITE" id="PS00236">
    <property type="entry name" value="NEUROTR_ION_CHANNEL"/>
    <property type="match status" value="1"/>
</dbReference>
<reference key="1">
    <citation type="journal article" date="2003" name="PLoS Biol.">
        <title>The genome sequence of Caenorhabditis briggsae: a platform for comparative genomics.</title>
        <authorList>
            <person name="Stein L.D."/>
            <person name="Bao Z."/>
            <person name="Blasiar D."/>
            <person name="Blumenthal T."/>
            <person name="Brent M.R."/>
            <person name="Chen N."/>
            <person name="Chinwalla A."/>
            <person name="Clarke L."/>
            <person name="Clee C."/>
            <person name="Coghlan A."/>
            <person name="Coulson A."/>
            <person name="D'Eustachio P."/>
            <person name="Fitch D.H.A."/>
            <person name="Fulton L.A."/>
            <person name="Fulton R.E."/>
            <person name="Griffiths-Jones S."/>
            <person name="Harris T.W."/>
            <person name="Hillier L.W."/>
            <person name="Kamath R."/>
            <person name="Kuwabara P.E."/>
            <person name="Mardis E.R."/>
            <person name="Marra M.A."/>
            <person name="Miner T.L."/>
            <person name="Minx P."/>
            <person name="Mullikin J.C."/>
            <person name="Plumb R.W."/>
            <person name="Rogers J."/>
            <person name="Schein J.E."/>
            <person name="Sohrmann M."/>
            <person name="Spieth J."/>
            <person name="Stajich J.E."/>
            <person name="Wei C."/>
            <person name="Willey D."/>
            <person name="Wilson R.K."/>
            <person name="Durbin R.M."/>
            <person name="Waterston R.H."/>
        </authorList>
    </citation>
    <scope>NUCLEOTIDE SEQUENCE [LARGE SCALE GENOMIC DNA]</scope>
    <source>
        <strain>AF16</strain>
    </source>
</reference>
<organism>
    <name type="scientific">Caenorhabditis briggsae</name>
    <dbReference type="NCBI Taxonomy" id="6238"/>
    <lineage>
        <taxon>Eukaryota</taxon>
        <taxon>Metazoa</taxon>
        <taxon>Ecdysozoa</taxon>
        <taxon>Nematoda</taxon>
        <taxon>Chromadorea</taxon>
        <taxon>Rhabditida</taxon>
        <taxon>Rhabditina</taxon>
        <taxon>Rhabditomorpha</taxon>
        <taxon>Rhabditoidea</taxon>
        <taxon>Rhabditidae</taxon>
        <taxon>Peloderinae</taxon>
        <taxon>Caenorhabditis</taxon>
    </lineage>
</organism>
<feature type="signal peptide" evidence="2">
    <location>
        <begin position="1"/>
        <end position="24"/>
    </location>
</feature>
<feature type="chain" id="PRO_0000329000" description="Acetylcholine receptor-like protein cup-4">
    <location>
        <begin position="25"/>
        <end position="435"/>
    </location>
</feature>
<feature type="transmembrane region" description="Helical" evidence="2">
    <location>
        <begin position="298"/>
        <end position="318"/>
    </location>
</feature>
<feature type="transmembrane region" description="Helical" evidence="2">
    <location>
        <begin position="341"/>
        <end position="361"/>
    </location>
</feature>
<feature type="transmembrane region" description="Helical" evidence="2">
    <location>
        <begin position="413"/>
        <end position="433"/>
    </location>
</feature>
<feature type="glycosylation site" description="N-linked (GlcNAc...) asparagine" evidence="2">
    <location>
        <position position="41"/>
    </location>
</feature>
<feature type="glycosylation site" description="N-linked (GlcNAc...) asparagine" evidence="2">
    <location>
        <position position="68"/>
    </location>
</feature>
<feature type="glycosylation site" description="N-linked (GlcNAc...) asparagine" evidence="2">
    <location>
        <position position="237"/>
    </location>
</feature>
<feature type="glycosylation site" description="N-linked (GlcNAc...) asparagine" evidence="2">
    <location>
        <position position="249"/>
    </location>
</feature>
<feature type="glycosylation site" description="N-linked (GlcNAc...) asparagine" evidence="2">
    <location>
        <position position="403"/>
    </location>
</feature>
<name>CUP4_CAEBR</name>
<accession>A8XF54</accession>
<evidence type="ECO:0000250" key="1">
    <source>
        <dbReference type="UniProtKB" id="P34271"/>
    </source>
</evidence>
<evidence type="ECO:0000255" key="2"/>
<evidence type="ECO:0000305" key="3"/>
<gene>
    <name evidence="1" type="primary">cup-4</name>
    <name type="ORF">CBG12273</name>
</gene>
<comment type="function">
    <text evidence="1">Thought to regulate endocytosis in coelomocytes through modulation of phospholipase C activity. Possible acetylcholine receptor (By similarity).</text>
</comment>
<comment type="subcellular location">
    <subcellularLocation>
        <location evidence="1">Cytoplasmic vesicle membrane</location>
        <topology evidence="1">Multi-pass membrane protein</topology>
    </subcellularLocation>
</comment>
<comment type="similarity">
    <text evidence="3">Belongs to the ligand-gated ion channel (TC 1.A.9) family. Acetylcholine receptor (TC 1.A.9.1) subfamily.</text>
</comment>
<proteinExistence type="inferred from homology"/>
<sequence length="435" mass="50067">MRLLLIFTVIFVFYLAILKRDVNAQQQGIDSEEGDAETFFNRTYSAHQSDLEKRIFRGYDIKKRPVKNASVPTVVDVHWHVIHVSINQKEQTMTLHGHIYMRWYDEYLVWDPKDFAGIHYARVKKWQVWQPKIRVSNSASGLASAFDFSTSAHVIIQMVEKDRAKVEMYPTFSIKVGCMFDFGDFPYDQNKCSVNLFATDTMAEVQLQNLYNIPPTLSFGWEEQKMKRIISDFKILNVSASQFYYGSGNVSKTAPVTGFELGNTWSMLAVNVDFVRHSPYFWSTIVAPTLVCTMFIQVSFFAPTVSLAFVINLMAIYLEFMFLQDITIKIPLYLSKRPSSITLFHILLISNIVSAVFHGVLCALCSTKVPVPLPIRKIYAVKDYVPASWKEEGMVVDYACDTNWTEWTRTARPLAGLAMFVYFVIMFILYLVVRI</sequence>